<accession>C0PVJ3</accession>
<keyword id="KW-0028">Amino-acid biosynthesis</keyword>
<keyword id="KW-0368">Histidine biosynthesis</keyword>
<keyword id="KW-0378">Hydrolase</keyword>
<keyword id="KW-0486">Methionine biosynthesis</keyword>
<keyword id="KW-0511">Multifunctional enzyme</keyword>
<keyword id="KW-0521">NADP</keyword>
<keyword id="KW-0554">One-carbon metabolism</keyword>
<keyword id="KW-0560">Oxidoreductase</keyword>
<keyword id="KW-0658">Purine biosynthesis</keyword>
<feature type="chain" id="PRO_1000185626" description="Bifunctional protein FolD">
    <location>
        <begin position="1"/>
        <end position="288"/>
    </location>
</feature>
<feature type="binding site" evidence="1">
    <location>
        <begin position="166"/>
        <end position="168"/>
    </location>
    <ligand>
        <name>NADP(+)</name>
        <dbReference type="ChEBI" id="CHEBI:58349"/>
    </ligand>
</feature>
<feature type="binding site" evidence="1">
    <location>
        <position position="232"/>
    </location>
    <ligand>
        <name>NADP(+)</name>
        <dbReference type="ChEBI" id="CHEBI:58349"/>
    </ligand>
</feature>
<gene>
    <name evidence="1" type="primary">folD</name>
    <name type="ordered locus">SPC_0556</name>
</gene>
<evidence type="ECO:0000255" key="1">
    <source>
        <dbReference type="HAMAP-Rule" id="MF_01576"/>
    </source>
</evidence>
<reference key="1">
    <citation type="journal article" date="2009" name="PLoS ONE">
        <title>Salmonella paratyphi C: genetic divergence from Salmonella choleraesuis and pathogenic convergence with Salmonella typhi.</title>
        <authorList>
            <person name="Liu W.-Q."/>
            <person name="Feng Y."/>
            <person name="Wang Y."/>
            <person name="Zou Q.-H."/>
            <person name="Chen F."/>
            <person name="Guo J.-T."/>
            <person name="Peng Y.-H."/>
            <person name="Jin Y."/>
            <person name="Li Y.-G."/>
            <person name="Hu S.-N."/>
            <person name="Johnston R.N."/>
            <person name="Liu G.-R."/>
            <person name="Liu S.-L."/>
        </authorList>
    </citation>
    <scope>NUCLEOTIDE SEQUENCE [LARGE SCALE GENOMIC DNA]</scope>
    <source>
        <strain>RKS4594</strain>
    </source>
</reference>
<comment type="function">
    <text evidence="1">Catalyzes the oxidation of 5,10-methylenetetrahydrofolate to 5,10-methenyltetrahydrofolate and then the hydrolysis of 5,10-methenyltetrahydrofolate to 10-formyltetrahydrofolate.</text>
</comment>
<comment type="catalytic activity">
    <reaction evidence="1">
        <text>(6R)-5,10-methylene-5,6,7,8-tetrahydrofolate + NADP(+) = (6R)-5,10-methenyltetrahydrofolate + NADPH</text>
        <dbReference type="Rhea" id="RHEA:22812"/>
        <dbReference type="ChEBI" id="CHEBI:15636"/>
        <dbReference type="ChEBI" id="CHEBI:57455"/>
        <dbReference type="ChEBI" id="CHEBI:57783"/>
        <dbReference type="ChEBI" id="CHEBI:58349"/>
        <dbReference type="EC" id="1.5.1.5"/>
    </reaction>
</comment>
<comment type="catalytic activity">
    <reaction evidence="1">
        <text>(6R)-5,10-methenyltetrahydrofolate + H2O = (6R)-10-formyltetrahydrofolate + H(+)</text>
        <dbReference type="Rhea" id="RHEA:23700"/>
        <dbReference type="ChEBI" id="CHEBI:15377"/>
        <dbReference type="ChEBI" id="CHEBI:15378"/>
        <dbReference type="ChEBI" id="CHEBI:57455"/>
        <dbReference type="ChEBI" id="CHEBI:195366"/>
        <dbReference type="EC" id="3.5.4.9"/>
    </reaction>
</comment>
<comment type="pathway">
    <text evidence="1">One-carbon metabolism; tetrahydrofolate interconversion.</text>
</comment>
<comment type="subunit">
    <text evidence="1">Homodimer.</text>
</comment>
<comment type="similarity">
    <text evidence="1">Belongs to the tetrahydrofolate dehydrogenase/cyclohydrolase family.</text>
</comment>
<dbReference type="EC" id="1.5.1.5" evidence="1"/>
<dbReference type="EC" id="3.5.4.9" evidence="1"/>
<dbReference type="EMBL" id="CP000857">
    <property type="protein sequence ID" value="ACN44736.1"/>
    <property type="molecule type" value="Genomic_DNA"/>
</dbReference>
<dbReference type="RefSeq" id="WP_000729165.1">
    <property type="nucleotide sequence ID" value="NC_012125.1"/>
</dbReference>
<dbReference type="SMR" id="C0PVJ3"/>
<dbReference type="KEGG" id="sei:SPC_0556"/>
<dbReference type="HOGENOM" id="CLU_034045_2_1_6"/>
<dbReference type="UniPathway" id="UPA00193"/>
<dbReference type="Proteomes" id="UP000001599">
    <property type="component" value="Chromosome"/>
</dbReference>
<dbReference type="GO" id="GO:0005829">
    <property type="term" value="C:cytosol"/>
    <property type="evidence" value="ECO:0007669"/>
    <property type="project" value="TreeGrafter"/>
</dbReference>
<dbReference type="GO" id="GO:0004477">
    <property type="term" value="F:methenyltetrahydrofolate cyclohydrolase activity"/>
    <property type="evidence" value="ECO:0007669"/>
    <property type="project" value="UniProtKB-UniRule"/>
</dbReference>
<dbReference type="GO" id="GO:0004488">
    <property type="term" value="F:methylenetetrahydrofolate dehydrogenase (NADP+) activity"/>
    <property type="evidence" value="ECO:0007669"/>
    <property type="project" value="UniProtKB-UniRule"/>
</dbReference>
<dbReference type="GO" id="GO:0000105">
    <property type="term" value="P:L-histidine biosynthetic process"/>
    <property type="evidence" value="ECO:0007669"/>
    <property type="project" value="UniProtKB-KW"/>
</dbReference>
<dbReference type="GO" id="GO:0009086">
    <property type="term" value="P:methionine biosynthetic process"/>
    <property type="evidence" value="ECO:0007669"/>
    <property type="project" value="UniProtKB-KW"/>
</dbReference>
<dbReference type="GO" id="GO:0006164">
    <property type="term" value="P:purine nucleotide biosynthetic process"/>
    <property type="evidence" value="ECO:0007669"/>
    <property type="project" value="UniProtKB-KW"/>
</dbReference>
<dbReference type="GO" id="GO:0035999">
    <property type="term" value="P:tetrahydrofolate interconversion"/>
    <property type="evidence" value="ECO:0007669"/>
    <property type="project" value="UniProtKB-UniRule"/>
</dbReference>
<dbReference type="CDD" id="cd01080">
    <property type="entry name" value="NAD_bind_m-THF_DH_Cyclohyd"/>
    <property type="match status" value="1"/>
</dbReference>
<dbReference type="FunFam" id="3.40.50.10860:FF:000001">
    <property type="entry name" value="Bifunctional protein FolD"/>
    <property type="match status" value="1"/>
</dbReference>
<dbReference type="FunFam" id="3.40.50.720:FF:000006">
    <property type="entry name" value="Bifunctional protein FolD"/>
    <property type="match status" value="1"/>
</dbReference>
<dbReference type="Gene3D" id="3.40.50.10860">
    <property type="entry name" value="Leucine Dehydrogenase, chain A, domain 1"/>
    <property type="match status" value="1"/>
</dbReference>
<dbReference type="Gene3D" id="3.40.50.720">
    <property type="entry name" value="NAD(P)-binding Rossmann-like Domain"/>
    <property type="match status" value="1"/>
</dbReference>
<dbReference type="HAMAP" id="MF_01576">
    <property type="entry name" value="THF_DHG_CYH"/>
    <property type="match status" value="1"/>
</dbReference>
<dbReference type="InterPro" id="IPR046346">
    <property type="entry name" value="Aminoacid_DH-like_N_sf"/>
</dbReference>
<dbReference type="InterPro" id="IPR036291">
    <property type="entry name" value="NAD(P)-bd_dom_sf"/>
</dbReference>
<dbReference type="InterPro" id="IPR000672">
    <property type="entry name" value="THF_DH/CycHdrlase"/>
</dbReference>
<dbReference type="InterPro" id="IPR020630">
    <property type="entry name" value="THF_DH/CycHdrlase_cat_dom"/>
</dbReference>
<dbReference type="InterPro" id="IPR020867">
    <property type="entry name" value="THF_DH/CycHdrlase_CS"/>
</dbReference>
<dbReference type="InterPro" id="IPR020631">
    <property type="entry name" value="THF_DH/CycHdrlase_NAD-bd_dom"/>
</dbReference>
<dbReference type="NCBIfam" id="NF008058">
    <property type="entry name" value="PRK10792.1"/>
    <property type="match status" value="1"/>
</dbReference>
<dbReference type="NCBIfam" id="NF010783">
    <property type="entry name" value="PRK14186.1"/>
    <property type="match status" value="1"/>
</dbReference>
<dbReference type="PANTHER" id="PTHR48099:SF5">
    <property type="entry name" value="C-1-TETRAHYDROFOLATE SYNTHASE, CYTOPLASMIC"/>
    <property type="match status" value="1"/>
</dbReference>
<dbReference type="PANTHER" id="PTHR48099">
    <property type="entry name" value="C-1-TETRAHYDROFOLATE SYNTHASE, CYTOPLASMIC-RELATED"/>
    <property type="match status" value="1"/>
</dbReference>
<dbReference type="Pfam" id="PF00763">
    <property type="entry name" value="THF_DHG_CYH"/>
    <property type="match status" value="1"/>
</dbReference>
<dbReference type="Pfam" id="PF02882">
    <property type="entry name" value="THF_DHG_CYH_C"/>
    <property type="match status" value="1"/>
</dbReference>
<dbReference type="PRINTS" id="PR00085">
    <property type="entry name" value="THFDHDRGNASE"/>
</dbReference>
<dbReference type="SUPFAM" id="SSF53223">
    <property type="entry name" value="Aminoacid dehydrogenase-like, N-terminal domain"/>
    <property type="match status" value="1"/>
</dbReference>
<dbReference type="SUPFAM" id="SSF51735">
    <property type="entry name" value="NAD(P)-binding Rossmann-fold domains"/>
    <property type="match status" value="1"/>
</dbReference>
<dbReference type="PROSITE" id="PS00766">
    <property type="entry name" value="THF_DHG_CYH_1"/>
    <property type="match status" value="1"/>
</dbReference>
<dbReference type="PROSITE" id="PS00767">
    <property type="entry name" value="THF_DHG_CYH_2"/>
    <property type="match status" value="1"/>
</dbReference>
<organism>
    <name type="scientific">Salmonella paratyphi C (strain RKS4594)</name>
    <dbReference type="NCBI Taxonomy" id="476213"/>
    <lineage>
        <taxon>Bacteria</taxon>
        <taxon>Pseudomonadati</taxon>
        <taxon>Pseudomonadota</taxon>
        <taxon>Gammaproteobacteria</taxon>
        <taxon>Enterobacterales</taxon>
        <taxon>Enterobacteriaceae</taxon>
        <taxon>Salmonella</taxon>
    </lineage>
</organism>
<protein>
    <recommendedName>
        <fullName evidence="1">Bifunctional protein FolD</fullName>
    </recommendedName>
    <domain>
        <recommendedName>
            <fullName evidence="1">Methylenetetrahydrofolate dehydrogenase</fullName>
            <ecNumber evidence="1">1.5.1.5</ecNumber>
        </recommendedName>
    </domain>
    <domain>
        <recommendedName>
            <fullName evidence="1">Methenyltetrahydrofolate cyclohydrolase</fullName>
            <ecNumber evidence="1">3.5.4.9</ecNumber>
        </recommendedName>
    </domain>
</protein>
<name>FOLD_SALPC</name>
<proteinExistence type="inferred from homology"/>
<sequence length="288" mass="30844">MAAKIIDGKTIAQQVRSEVAQKVQARVAAGLRAPGLAVVLVGSNPASQIYVASKRKACDEVGFVSRSYDLPETTSEAELLALIDTLNADNTIDGILVQLPLPAGIDNVKVLERIAPDKDVDGFHPYNVGRLCQRAPRLRPCTPRGIVTLLERYNIDTYGLNAVVIGASNIVGRPMSMELLLAGCTTTVTHRFTKDLRHHVEHADLLIVAVGKPGFIPGEWIKEGAIVIDVGINRLENGKVVGDVVFDEAAARASYITPVPGGVGPMTVATLIENTLQACIEYHDPQGK</sequence>